<gene>
    <name evidence="1" type="primary">prmA</name>
    <name type="ordered locus">HI_0978</name>
</gene>
<reference key="1">
    <citation type="journal article" date="1995" name="Science">
        <title>Whole-genome random sequencing and assembly of Haemophilus influenzae Rd.</title>
        <authorList>
            <person name="Fleischmann R.D."/>
            <person name="Adams M.D."/>
            <person name="White O."/>
            <person name="Clayton R.A."/>
            <person name="Kirkness E.F."/>
            <person name="Kerlavage A.R."/>
            <person name="Bult C.J."/>
            <person name="Tomb J.-F."/>
            <person name="Dougherty B.A."/>
            <person name="Merrick J.M."/>
            <person name="McKenney K."/>
            <person name="Sutton G.G."/>
            <person name="FitzHugh W."/>
            <person name="Fields C.A."/>
            <person name="Gocayne J.D."/>
            <person name="Scott J.D."/>
            <person name="Shirley R."/>
            <person name="Liu L.-I."/>
            <person name="Glodek A."/>
            <person name="Kelley J.M."/>
            <person name="Weidman J.F."/>
            <person name="Phillips C.A."/>
            <person name="Spriggs T."/>
            <person name="Hedblom E."/>
            <person name="Cotton M.D."/>
            <person name="Utterback T.R."/>
            <person name="Hanna M.C."/>
            <person name="Nguyen D.T."/>
            <person name="Saudek D.M."/>
            <person name="Brandon R.C."/>
            <person name="Fine L.D."/>
            <person name="Fritchman J.L."/>
            <person name="Fuhrmann J.L."/>
            <person name="Geoghagen N.S.M."/>
            <person name="Gnehm C.L."/>
            <person name="McDonald L.A."/>
            <person name="Small K.V."/>
            <person name="Fraser C.M."/>
            <person name="Smith H.O."/>
            <person name="Venter J.C."/>
        </authorList>
    </citation>
    <scope>NUCLEOTIDE SEQUENCE [LARGE SCALE GENOMIC DNA]</scope>
    <source>
        <strain>ATCC 51907 / DSM 11121 / KW20 / Rd</strain>
    </source>
</reference>
<proteinExistence type="inferred from homology"/>
<name>PRMA_HAEIN</name>
<sequence>MAWIQIRLNSTNEKAEQMSDFLEEIGSVSVTFMDSQDTPIFEPLPGETRLWGNTDVIALFDAETDMAEIVRLLKEAKHLDSNTAYKIGTNRRLKNWEREWMDNFHPMQFGKRLWICPSWRDVPDENAVNVMLDPGLAFGTGTHPTTALCLEWLDGLDLKDKSVIDFGCGSGILAIAALKLGAKSAVGIDIDPQAILASRNNAEQNGVTDRLQLFLSDEKPSDLKADVVVANILAGPLKELYPIISQLVKPNGDLGLSGILETQAQSVCDTYTQTFALEPVAAREEWCRITGKLKTL</sequence>
<comment type="function">
    <text evidence="1">Methylates ribosomal protein L11.</text>
</comment>
<comment type="catalytic activity">
    <reaction evidence="1">
        <text>L-lysyl-[protein] + 3 S-adenosyl-L-methionine = N(6),N(6),N(6)-trimethyl-L-lysyl-[protein] + 3 S-adenosyl-L-homocysteine + 3 H(+)</text>
        <dbReference type="Rhea" id="RHEA:54192"/>
        <dbReference type="Rhea" id="RHEA-COMP:9752"/>
        <dbReference type="Rhea" id="RHEA-COMP:13826"/>
        <dbReference type="ChEBI" id="CHEBI:15378"/>
        <dbReference type="ChEBI" id="CHEBI:29969"/>
        <dbReference type="ChEBI" id="CHEBI:57856"/>
        <dbReference type="ChEBI" id="CHEBI:59789"/>
        <dbReference type="ChEBI" id="CHEBI:61961"/>
    </reaction>
</comment>
<comment type="subcellular location">
    <subcellularLocation>
        <location evidence="1">Cytoplasm</location>
    </subcellularLocation>
</comment>
<comment type="similarity">
    <text evidence="1 2">Belongs to the methyltransferase superfamily. PrmA family.</text>
</comment>
<dbReference type="EC" id="2.1.1.-" evidence="1"/>
<dbReference type="EMBL" id="L42023">
    <property type="protein sequence ID" value="AAC22638.1"/>
    <property type="molecule type" value="Genomic_DNA"/>
</dbReference>
<dbReference type="PIR" id="I64105">
    <property type="entry name" value="I64105"/>
</dbReference>
<dbReference type="RefSeq" id="NP_439141.1">
    <property type="nucleotide sequence ID" value="NC_000907.1"/>
</dbReference>
<dbReference type="SMR" id="P44402"/>
<dbReference type="STRING" id="71421.HI_0978"/>
<dbReference type="EnsemblBacteria" id="AAC22638">
    <property type="protein sequence ID" value="AAC22638"/>
    <property type="gene ID" value="HI_0978"/>
</dbReference>
<dbReference type="KEGG" id="hin:HI_0978"/>
<dbReference type="PATRIC" id="fig|71421.8.peg.1021"/>
<dbReference type="eggNOG" id="COG2264">
    <property type="taxonomic scope" value="Bacteria"/>
</dbReference>
<dbReference type="HOGENOM" id="CLU_049382_4_1_6"/>
<dbReference type="OrthoDB" id="9785995at2"/>
<dbReference type="PhylomeDB" id="P44402"/>
<dbReference type="BioCyc" id="HINF71421:G1GJ1-1020-MONOMER"/>
<dbReference type="Proteomes" id="UP000000579">
    <property type="component" value="Chromosome"/>
</dbReference>
<dbReference type="GO" id="GO:0005829">
    <property type="term" value="C:cytosol"/>
    <property type="evidence" value="ECO:0000318"/>
    <property type="project" value="GO_Central"/>
</dbReference>
<dbReference type="GO" id="GO:0016279">
    <property type="term" value="F:protein-lysine N-methyltransferase activity"/>
    <property type="evidence" value="ECO:0000318"/>
    <property type="project" value="GO_Central"/>
</dbReference>
<dbReference type="GO" id="GO:0032259">
    <property type="term" value="P:methylation"/>
    <property type="evidence" value="ECO:0007669"/>
    <property type="project" value="UniProtKB-KW"/>
</dbReference>
<dbReference type="CDD" id="cd02440">
    <property type="entry name" value="AdoMet_MTases"/>
    <property type="match status" value="1"/>
</dbReference>
<dbReference type="Gene3D" id="3.40.50.150">
    <property type="entry name" value="Vaccinia Virus protein VP39"/>
    <property type="match status" value="1"/>
</dbReference>
<dbReference type="HAMAP" id="MF_00735">
    <property type="entry name" value="Methyltr_PrmA"/>
    <property type="match status" value="1"/>
</dbReference>
<dbReference type="InterPro" id="IPR050078">
    <property type="entry name" value="Ribosomal_L11_MeTrfase_PrmA"/>
</dbReference>
<dbReference type="InterPro" id="IPR004498">
    <property type="entry name" value="Ribosomal_PrmA_MeTrfase"/>
</dbReference>
<dbReference type="InterPro" id="IPR029063">
    <property type="entry name" value="SAM-dependent_MTases_sf"/>
</dbReference>
<dbReference type="NCBIfam" id="TIGR00406">
    <property type="entry name" value="prmA"/>
    <property type="match status" value="1"/>
</dbReference>
<dbReference type="PANTHER" id="PTHR43648">
    <property type="entry name" value="ELECTRON TRANSFER FLAVOPROTEIN BETA SUBUNIT LYSINE METHYLTRANSFERASE"/>
    <property type="match status" value="1"/>
</dbReference>
<dbReference type="PANTHER" id="PTHR43648:SF1">
    <property type="entry name" value="ELECTRON TRANSFER FLAVOPROTEIN BETA SUBUNIT LYSINE METHYLTRANSFERASE"/>
    <property type="match status" value="1"/>
</dbReference>
<dbReference type="Pfam" id="PF06325">
    <property type="entry name" value="PrmA"/>
    <property type="match status" value="1"/>
</dbReference>
<dbReference type="PIRSF" id="PIRSF000401">
    <property type="entry name" value="RPL11_MTase"/>
    <property type="match status" value="1"/>
</dbReference>
<dbReference type="SUPFAM" id="SSF53335">
    <property type="entry name" value="S-adenosyl-L-methionine-dependent methyltransferases"/>
    <property type="match status" value="1"/>
</dbReference>
<feature type="chain" id="PRO_0000192266" description="Ribosomal protein L11 methyltransferase">
    <location>
        <begin position="1"/>
        <end position="296"/>
    </location>
</feature>
<feature type="binding site" evidence="1">
    <location>
        <position position="146"/>
    </location>
    <ligand>
        <name>S-adenosyl-L-methionine</name>
        <dbReference type="ChEBI" id="CHEBI:59789"/>
    </ligand>
</feature>
<feature type="binding site" evidence="1">
    <location>
        <position position="167"/>
    </location>
    <ligand>
        <name>S-adenosyl-L-methionine</name>
        <dbReference type="ChEBI" id="CHEBI:59789"/>
    </ligand>
</feature>
<feature type="binding site" evidence="1">
    <location>
        <position position="189"/>
    </location>
    <ligand>
        <name>S-adenosyl-L-methionine</name>
        <dbReference type="ChEBI" id="CHEBI:59789"/>
    </ligand>
</feature>
<feature type="binding site" evidence="1">
    <location>
        <position position="231"/>
    </location>
    <ligand>
        <name>S-adenosyl-L-methionine</name>
        <dbReference type="ChEBI" id="CHEBI:59789"/>
    </ligand>
</feature>
<protein>
    <recommendedName>
        <fullName evidence="1">Ribosomal protein L11 methyltransferase</fullName>
        <shortName evidence="1">L11 Mtase</shortName>
        <ecNumber evidence="1">2.1.1.-</ecNumber>
    </recommendedName>
</protein>
<keyword id="KW-0963">Cytoplasm</keyword>
<keyword id="KW-0489">Methyltransferase</keyword>
<keyword id="KW-1185">Reference proteome</keyword>
<keyword id="KW-0949">S-adenosyl-L-methionine</keyword>
<keyword id="KW-0808">Transferase</keyword>
<evidence type="ECO:0000255" key="1">
    <source>
        <dbReference type="HAMAP-Rule" id="MF_00735"/>
    </source>
</evidence>
<evidence type="ECO:0000305" key="2"/>
<accession>P44402</accession>
<organism>
    <name type="scientific">Haemophilus influenzae (strain ATCC 51907 / DSM 11121 / KW20 / Rd)</name>
    <dbReference type="NCBI Taxonomy" id="71421"/>
    <lineage>
        <taxon>Bacteria</taxon>
        <taxon>Pseudomonadati</taxon>
        <taxon>Pseudomonadota</taxon>
        <taxon>Gammaproteobacteria</taxon>
        <taxon>Pasteurellales</taxon>
        <taxon>Pasteurellaceae</taxon>
        <taxon>Haemophilus</taxon>
    </lineage>
</organism>